<proteinExistence type="inferred from homology"/>
<sequence>MTLIVTGAAGFIGANIVKALNERGETRIIAVDNLTRADKFRNLVDCEIDDYLDKTEFVERFARGDFGKVRAVFHEGACSDTMETDGRYMMDNNFRYSRAVLDTCLAQGTQFLYASSAAIYGGSTRFVEERDVEAPLNVYGYSKFLFDQVIRRVLPSAKSQIAGFRYFNVYGPRETHKGRMASVAFHNFNQFRAEGKVKLFGEYNGYAPGEQTRDFVSVEDVTKVNLFFFDHPEKSGIFNLGTGRAQPFNDIASTVVNTLRALDNQAPLTLAQQVEQGLIEYVPFPDALRGKYQCFTQADQTKLRAAGYDAPFLTVQEGVDRYVRWLSGQV</sequence>
<organism>
    <name type="scientific">Burkholderia cenocepacia (strain HI2424)</name>
    <dbReference type="NCBI Taxonomy" id="331272"/>
    <lineage>
        <taxon>Bacteria</taxon>
        <taxon>Pseudomonadati</taxon>
        <taxon>Pseudomonadota</taxon>
        <taxon>Betaproteobacteria</taxon>
        <taxon>Burkholderiales</taxon>
        <taxon>Burkholderiaceae</taxon>
        <taxon>Burkholderia</taxon>
        <taxon>Burkholderia cepacia complex</taxon>
    </lineage>
</organism>
<evidence type="ECO:0000255" key="1">
    <source>
        <dbReference type="HAMAP-Rule" id="MF_01601"/>
    </source>
</evidence>
<feature type="chain" id="PRO_1000069343" description="ADP-L-glycero-D-manno-heptose-6-epimerase">
    <location>
        <begin position="1"/>
        <end position="330"/>
    </location>
</feature>
<feature type="active site" description="Proton acceptor" evidence="1">
    <location>
        <position position="139"/>
    </location>
</feature>
<feature type="active site" description="Proton acceptor" evidence="1">
    <location>
        <position position="177"/>
    </location>
</feature>
<feature type="binding site" evidence="1">
    <location>
        <begin position="11"/>
        <end position="12"/>
    </location>
    <ligand>
        <name>NADP(+)</name>
        <dbReference type="ChEBI" id="CHEBI:58349"/>
    </ligand>
</feature>
<feature type="binding site" evidence="1">
    <location>
        <begin position="32"/>
        <end position="33"/>
    </location>
    <ligand>
        <name>NADP(+)</name>
        <dbReference type="ChEBI" id="CHEBI:58349"/>
    </ligand>
</feature>
<feature type="binding site" evidence="1">
    <location>
        <position position="39"/>
    </location>
    <ligand>
        <name>NADP(+)</name>
        <dbReference type="ChEBI" id="CHEBI:58349"/>
    </ligand>
</feature>
<feature type="binding site" evidence="1">
    <location>
        <position position="54"/>
    </location>
    <ligand>
        <name>NADP(+)</name>
        <dbReference type="ChEBI" id="CHEBI:58349"/>
    </ligand>
</feature>
<feature type="binding site" evidence="1">
    <location>
        <begin position="75"/>
        <end position="79"/>
    </location>
    <ligand>
        <name>NADP(+)</name>
        <dbReference type="ChEBI" id="CHEBI:58349"/>
    </ligand>
</feature>
<feature type="binding site" evidence="1">
    <location>
        <position position="92"/>
    </location>
    <ligand>
        <name>NADP(+)</name>
        <dbReference type="ChEBI" id="CHEBI:58349"/>
    </ligand>
</feature>
<feature type="binding site" evidence="1">
    <location>
        <position position="143"/>
    </location>
    <ligand>
        <name>NADP(+)</name>
        <dbReference type="ChEBI" id="CHEBI:58349"/>
    </ligand>
</feature>
<feature type="binding site" evidence="1">
    <location>
        <position position="168"/>
    </location>
    <ligand>
        <name>substrate</name>
    </ligand>
</feature>
<feature type="binding site" evidence="1">
    <location>
        <position position="169"/>
    </location>
    <ligand>
        <name>NADP(+)</name>
        <dbReference type="ChEBI" id="CHEBI:58349"/>
    </ligand>
</feature>
<feature type="binding site" evidence="1">
    <location>
        <position position="177"/>
    </location>
    <ligand>
        <name>NADP(+)</name>
        <dbReference type="ChEBI" id="CHEBI:58349"/>
    </ligand>
</feature>
<feature type="binding site" evidence="1">
    <location>
        <position position="179"/>
    </location>
    <ligand>
        <name>substrate</name>
    </ligand>
</feature>
<feature type="binding site" evidence="1">
    <location>
        <position position="186"/>
    </location>
    <ligand>
        <name>substrate</name>
    </ligand>
</feature>
<feature type="binding site" evidence="1">
    <location>
        <begin position="200"/>
        <end position="203"/>
    </location>
    <ligand>
        <name>substrate</name>
    </ligand>
</feature>
<feature type="binding site" evidence="1">
    <location>
        <position position="213"/>
    </location>
    <ligand>
        <name>substrate</name>
    </ligand>
</feature>
<feature type="binding site" evidence="1">
    <location>
        <position position="292"/>
    </location>
    <ligand>
        <name>substrate</name>
    </ligand>
</feature>
<accession>A0K5M9</accession>
<keyword id="KW-0119">Carbohydrate metabolism</keyword>
<keyword id="KW-0413">Isomerase</keyword>
<keyword id="KW-0521">NADP</keyword>
<protein>
    <recommendedName>
        <fullName evidence="1">ADP-L-glycero-D-manno-heptose-6-epimerase</fullName>
        <ecNumber evidence="1">5.1.3.20</ecNumber>
    </recommendedName>
    <alternativeName>
        <fullName evidence="1">ADP-L-glycero-beta-D-manno-heptose-6-epimerase</fullName>
        <shortName evidence="1">ADP-glyceromanno-heptose 6-epimerase</shortName>
        <shortName evidence="1">ADP-hep 6-epimerase</shortName>
        <shortName evidence="1">AGME</shortName>
    </alternativeName>
</protein>
<reference key="1">
    <citation type="submission" date="2006-08" db="EMBL/GenBank/DDBJ databases">
        <title>Complete sequence of chromosome 1 of Burkholderia cenocepacia HI2424.</title>
        <authorList>
            <person name="Copeland A."/>
            <person name="Lucas S."/>
            <person name="Lapidus A."/>
            <person name="Barry K."/>
            <person name="Detter J.C."/>
            <person name="Glavina del Rio T."/>
            <person name="Hammon N."/>
            <person name="Israni S."/>
            <person name="Pitluck S."/>
            <person name="Chain P."/>
            <person name="Malfatti S."/>
            <person name="Shin M."/>
            <person name="Vergez L."/>
            <person name="Schmutz J."/>
            <person name="Larimer F."/>
            <person name="Land M."/>
            <person name="Hauser L."/>
            <person name="Kyrpides N."/>
            <person name="Kim E."/>
            <person name="LiPuma J.J."/>
            <person name="Gonzalez C.F."/>
            <person name="Konstantinidis K."/>
            <person name="Tiedje J.M."/>
            <person name="Richardson P."/>
        </authorList>
    </citation>
    <scope>NUCLEOTIDE SEQUENCE [LARGE SCALE GENOMIC DNA]</scope>
    <source>
        <strain>HI2424</strain>
    </source>
</reference>
<comment type="function">
    <text evidence="1">Catalyzes the interconversion between ADP-D-glycero-beta-D-manno-heptose and ADP-L-glycero-beta-D-manno-heptose via an epimerization at carbon 6 of the heptose.</text>
</comment>
<comment type="catalytic activity">
    <reaction evidence="1">
        <text>ADP-D-glycero-beta-D-manno-heptose = ADP-L-glycero-beta-D-manno-heptose</text>
        <dbReference type="Rhea" id="RHEA:17577"/>
        <dbReference type="ChEBI" id="CHEBI:59967"/>
        <dbReference type="ChEBI" id="CHEBI:61506"/>
        <dbReference type="EC" id="5.1.3.20"/>
    </reaction>
</comment>
<comment type="cofactor">
    <cofactor evidence="1">
        <name>NADP(+)</name>
        <dbReference type="ChEBI" id="CHEBI:58349"/>
    </cofactor>
    <text evidence="1">Binds 1 NADP(+) per subunit.</text>
</comment>
<comment type="pathway">
    <text evidence="1">Nucleotide-sugar biosynthesis; ADP-L-glycero-beta-D-manno-heptose biosynthesis; ADP-L-glycero-beta-D-manno-heptose from D-glycero-beta-D-manno-heptose 7-phosphate: step 4/4.</text>
</comment>
<comment type="subunit">
    <text evidence="1">Homopentamer.</text>
</comment>
<comment type="domain">
    <text evidence="1">Contains a large N-terminal NADP-binding domain, and a smaller C-terminal substrate-binding domain.</text>
</comment>
<comment type="similarity">
    <text evidence="1">Belongs to the NAD(P)-dependent epimerase/dehydratase family. HldD subfamily.</text>
</comment>
<name>HLDD_BURCH</name>
<dbReference type="EC" id="5.1.3.20" evidence="1"/>
<dbReference type="EMBL" id="CP000458">
    <property type="protein sequence ID" value="ABK07806.1"/>
    <property type="molecule type" value="Genomic_DNA"/>
</dbReference>
<dbReference type="SMR" id="A0K5M9"/>
<dbReference type="KEGG" id="bch:Bcen2424_1053"/>
<dbReference type="HOGENOM" id="CLU_007383_1_3_4"/>
<dbReference type="UniPathway" id="UPA00356">
    <property type="reaction ID" value="UER00440"/>
</dbReference>
<dbReference type="GO" id="GO:0008712">
    <property type="term" value="F:ADP-glyceromanno-heptose 6-epimerase activity"/>
    <property type="evidence" value="ECO:0007669"/>
    <property type="project" value="UniProtKB-UniRule"/>
</dbReference>
<dbReference type="GO" id="GO:0050661">
    <property type="term" value="F:NADP binding"/>
    <property type="evidence" value="ECO:0007669"/>
    <property type="project" value="InterPro"/>
</dbReference>
<dbReference type="GO" id="GO:0097171">
    <property type="term" value="P:ADP-L-glycero-beta-D-manno-heptose biosynthetic process"/>
    <property type="evidence" value="ECO:0007669"/>
    <property type="project" value="UniProtKB-UniPathway"/>
</dbReference>
<dbReference type="GO" id="GO:0005975">
    <property type="term" value="P:carbohydrate metabolic process"/>
    <property type="evidence" value="ECO:0007669"/>
    <property type="project" value="UniProtKB-UniRule"/>
</dbReference>
<dbReference type="CDD" id="cd05248">
    <property type="entry name" value="ADP_GME_SDR_e"/>
    <property type="match status" value="1"/>
</dbReference>
<dbReference type="Gene3D" id="3.40.50.720">
    <property type="entry name" value="NAD(P)-binding Rossmann-like Domain"/>
    <property type="match status" value="1"/>
</dbReference>
<dbReference type="Gene3D" id="3.90.25.10">
    <property type="entry name" value="UDP-galactose 4-epimerase, domain 1"/>
    <property type="match status" value="1"/>
</dbReference>
<dbReference type="HAMAP" id="MF_01601">
    <property type="entry name" value="Heptose_epimerase"/>
    <property type="match status" value="1"/>
</dbReference>
<dbReference type="InterPro" id="IPR001509">
    <property type="entry name" value="Epimerase_deHydtase"/>
</dbReference>
<dbReference type="InterPro" id="IPR011912">
    <property type="entry name" value="Heptose_epim"/>
</dbReference>
<dbReference type="InterPro" id="IPR036291">
    <property type="entry name" value="NAD(P)-bd_dom_sf"/>
</dbReference>
<dbReference type="NCBIfam" id="TIGR02197">
    <property type="entry name" value="heptose_epim"/>
    <property type="match status" value="1"/>
</dbReference>
<dbReference type="PANTHER" id="PTHR43103:SF3">
    <property type="entry name" value="ADP-L-GLYCERO-D-MANNO-HEPTOSE-6-EPIMERASE"/>
    <property type="match status" value="1"/>
</dbReference>
<dbReference type="PANTHER" id="PTHR43103">
    <property type="entry name" value="NUCLEOSIDE-DIPHOSPHATE-SUGAR EPIMERASE"/>
    <property type="match status" value="1"/>
</dbReference>
<dbReference type="Pfam" id="PF01370">
    <property type="entry name" value="Epimerase"/>
    <property type="match status" value="1"/>
</dbReference>
<dbReference type="SUPFAM" id="SSF51735">
    <property type="entry name" value="NAD(P)-binding Rossmann-fold domains"/>
    <property type="match status" value="1"/>
</dbReference>
<gene>
    <name evidence="1" type="primary">hldD</name>
    <name type="ordered locus">Bcen2424_1053</name>
</gene>